<reference key="1">
    <citation type="journal article" date="2009" name="PLoS ONE">
        <title>Non mycobacterial virulence genes in the genome of the emerging pathogen Mycobacterium abscessus.</title>
        <authorList>
            <person name="Ripoll F."/>
            <person name="Pasek S."/>
            <person name="Schenowitz C."/>
            <person name="Dossat C."/>
            <person name="Barbe V."/>
            <person name="Rottman M."/>
            <person name="Macheras E."/>
            <person name="Heym B."/>
            <person name="Herrmann J.L."/>
            <person name="Daffe M."/>
            <person name="Brosch R."/>
            <person name="Risler J.L."/>
            <person name="Gaillard J.L."/>
        </authorList>
    </citation>
    <scope>NUCLEOTIDE SEQUENCE [LARGE SCALE GENOMIC DNA]</scope>
    <source>
        <strain>ATCC 19977 / DSM 44196 / CCUG 20993 / CIP 104536 / JCM 13569 / NCTC 13031 / TMC 1543 / L948</strain>
    </source>
</reference>
<keyword id="KW-1003">Cell membrane</keyword>
<keyword id="KW-0449">Lipoprotein</keyword>
<keyword id="KW-0472">Membrane</keyword>
<keyword id="KW-0564">Palmitate</keyword>
<keyword id="KW-1185">Reference proteome</keyword>
<keyword id="KW-0732">Signal</keyword>
<feature type="signal peptide" evidence="1">
    <location>
        <begin position="1"/>
        <end position="21"/>
    </location>
</feature>
<feature type="chain" id="PRO_0000434104" description="Putative lipoprotein MAB_4074c" evidence="1">
    <location>
        <begin position="22"/>
        <end position="154"/>
    </location>
</feature>
<feature type="lipid moiety-binding region" description="N-palmitoyl cysteine" evidence="1">
    <location>
        <position position="22"/>
    </location>
</feature>
<feature type="lipid moiety-binding region" description="S-diacylglycerol cysteine" evidence="1">
    <location>
        <position position="22"/>
    </location>
</feature>
<comment type="subcellular location">
    <subcellularLocation>
        <location evidence="1">Cell membrane</location>
        <topology evidence="1">Lipid-anchor</topology>
    </subcellularLocation>
</comment>
<comment type="similarity">
    <text evidence="2">Belongs to the mycobacterial 19 kDa antigen family.</text>
</comment>
<comment type="sequence caution" evidence="2">
    <conflict type="erroneous initiation">
        <sequence resource="EMBL-CDS" id="CAM64147"/>
    </conflict>
    <text>Truncated N-terminus.</text>
</comment>
<dbReference type="EMBL" id="CU458896">
    <property type="protein sequence ID" value="CAM64147.1"/>
    <property type="status" value="ALT_INIT"/>
    <property type="molecule type" value="Genomic_DNA"/>
</dbReference>
<dbReference type="SMR" id="B1MHR6"/>
<dbReference type="KEGG" id="mab:MAB_4074c"/>
<dbReference type="Proteomes" id="UP000007137">
    <property type="component" value="Chromosome"/>
</dbReference>
<dbReference type="GO" id="GO:0005886">
    <property type="term" value="C:plasma membrane"/>
    <property type="evidence" value="ECO:0007669"/>
    <property type="project" value="UniProtKB-SubCell"/>
</dbReference>
<dbReference type="InterPro" id="IPR008691">
    <property type="entry name" value="LpqH"/>
</dbReference>
<dbReference type="Pfam" id="PF05481">
    <property type="entry name" value="Myco_19_kDa"/>
    <property type="match status" value="1"/>
</dbReference>
<dbReference type="PROSITE" id="PS51257">
    <property type="entry name" value="PROKAR_LIPOPROTEIN"/>
    <property type="match status" value="1"/>
</dbReference>
<protein>
    <recommendedName>
        <fullName>Putative lipoprotein MAB_4074c</fullName>
    </recommendedName>
</protein>
<gene>
    <name type="ordered locus">MAB_4074c</name>
</gene>
<sequence length="154" mass="15117">MMNRVIVGAMGLLAAGAVVVGCSNDKPAGAAQVSSGSNAEVKVDGKDLAGLDLKSVTCVKQGGNINVASAAINGQQGLGVVMTDEATPKVTSLGLVYDGAALAVSEGMGAKVGSADVKVDGKTYTITGEASGADVKNPMAGMITKPFTIKVSCG</sequence>
<organism>
    <name type="scientific">Mycobacteroides abscessus (strain ATCC 19977 / DSM 44196 / CCUG 20993 / CIP 104536 / JCM 13569 / NCTC 13031 / TMC 1543 / L948)</name>
    <name type="common">Mycobacterium abscessus</name>
    <dbReference type="NCBI Taxonomy" id="561007"/>
    <lineage>
        <taxon>Bacteria</taxon>
        <taxon>Bacillati</taxon>
        <taxon>Actinomycetota</taxon>
        <taxon>Actinomycetes</taxon>
        <taxon>Mycobacteriales</taxon>
        <taxon>Mycobacteriaceae</taxon>
        <taxon>Mycobacteroides</taxon>
        <taxon>Mycobacteroides abscessus</taxon>
    </lineage>
</organism>
<evidence type="ECO:0000255" key="1">
    <source>
        <dbReference type="PROSITE-ProRule" id="PRU00303"/>
    </source>
</evidence>
<evidence type="ECO:0000305" key="2"/>
<proteinExistence type="inferred from homology"/>
<name>LP074_MYCA9</name>
<accession>B1MHR6</accession>